<keyword id="KW-0007">Acetylation</keyword>
<keyword id="KW-0030">Aminoacyl-tRNA synthetase</keyword>
<keyword id="KW-0067">ATP-binding</keyword>
<keyword id="KW-0963">Cytoplasm</keyword>
<keyword id="KW-0436">Ligase</keyword>
<keyword id="KW-0479">Metal-binding</keyword>
<keyword id="KW-0547">Nucleotide-binding</keyword>
<keyword id="KW-0648">Protein biosynthesis</keyword>
<keyword id="KW-0694">RNA-binding</keyword>
<keyword id="KW-0820">tRNA-binding</keyword>
<keyword id="KW-0862">Zinc</keyword>
<reference key="1">
    <citation type="journal article" date="2008" name="J. Bacteriol.">
        <title>Insights into the environmental resistance gene pool from the genome sequence of the multidrug-resistant environmental isolate Escherichia coli SMS-3-5.</title>
        <authorList>
            <person name="Fricke W.F."/>
            <person name="Wright M.S."/>
            <person name="Lindell A.H."/>
            <person name="Harkins D.M."/>
            <person name="Baker-Austin C."/>
            <person name="Ravel J."/>
            <person name="Stepanauskas R."/>
        </authorList>
    </citation>
    <scope>NUCLEOTIDE SEQUENCE [LARGE SCALE GENOMIC DNA]</scope>
    <source>
        <strain>SMS-3-5 / SECEC</strain>
    </source>
</reference>
<gene>
    <name evidence="1" type="primary">thrS</name>
    <name type="ordered locus">EcSMS35_1472</name>
</gene>
<name>SYT_ECOSM</name>
<dbReference type="EC" id="6.1.1.3" evidence="1"/>
<dbReference type="EMBL" id="CP000970">
    <property type="protein sequence ID" value="ACB16108.1"/>
    <property type="molecule type" value="Genomic_DNA"/>
</dbReference>
<dbReference type="RefSeq" id="WP_001144202.1">
    <property type="nucleotide sequence ID" value="NC_010498.1"/>
</dbReference>
<dbReference type="SMR" id="B1LE12"/>
<dbReference type="GeneID" id="93775932"/>
<dbReference type="KEGG" id="ecm:EcSMS35_1472"/>
<dbReference type="HOGENOM" id="CLU_008554_0_1_6"/>
<dbReference type="Proteomes" id="UP000007011">
    <property type="component" value="Chromosome"/>
</dbReference>
<dbReference type="GO" id="GO:0005829">
    <property type="term" value="C:cytosol"/>
    <property type="evidence" value="ECO:0007669"/>
    <property type="project" value="TreeGrafter"/>
</dbReference>
<dbReference type="GO" id="GO:0005524">
    <property type="term" value="F:ATP binding"/>
    <property type="evidence" value="ECO:0007669"/>
    <property type="project" value="UniProtKB-UniRule"/>
</dbReference>
<dbReference type="GO" id="GO:0046872">
    <property type="term" value="F:metal ion binding"/>
    <property type="evidence" value="ECO:0007669"/>
    <property type="project" value="UniProtKB-KW"/>
</dbReference>
<dbReference type="GO" id="GO:0004829">
    <property type="term" value="F:threonine-tRNA ligase activity"/>
    <property type="evidence" value="ECO:0007669"/>
    <property type="project" value="UniProtKB-UniRule"/>
</dbReference>
<dbReference type="GO" id="GO:0000049">
    <property type="term" value="F:tRNA binding"/>
    <property type="evidence" value="ECO:0007669"/>
    <property type="project" value="UniProtKB-KW"/>
</dbReference>
<dbReference type="GO" id="GO:0006435">
    <property type="term" value="P:threonyl-tRNA aminoacylation"/>
    <property type="evidence" value="ECO:0007669"/>
    <property type="project" value="UniProtKB-UniRule"/>
</dbReference>
<dbReference type="CDD" id="cd01667">
    <property type="entry name" value="TGS_ThrRS"/>
    <property type="match status" value="1"/>
</dbReference>
<dbReference type="CDD" id="cd00860">
    <property type="entry name" value="ThrRS_anticodon"/>
    <property type="match status" value="1"/>
</dbReference>
<dbReference type="CDD" id="cd00771">
    <property type="entry name" value="ThrRS_core"/>
    <property type="match status" value="1"/>
</dbReference>
<dbReference type="FunFam" id="3.10.20.30:FF:000005">
    <property type="entry name" value="Threonine--tRNA ligase"/>
    <property type="match status" value="1"/>
</dbReference>
<dbReference type="FunFam" id="3.30.54.20:FF:000002">
    <property type="entry name" value="Threonine--tRNA ligase"/>
    <property type="match status" value="1"/>
</dbReference>
<dbReference type="FunFam" id="3.30.930.10:FF:000002">
    <property type="entry name" value="Threonine--tRNA ligase"/>
    <property type="match status" value="1"/>
</dbReference>
<dbReference type="FunFam" id="3.40.50.800:FF:000001">
    <property type="entry name" value="Threonine--tRNA ligase"/>
    <property type="match status" value="1"/>
</dbReference>
<dbReference type="FunFam" id="3.30.980.10:FF:000005">
    <property type="entry name" value="Threonyl-tRNA synthetase, mitochondrial"/>
    <property type="match status" value="1"/>
</dbReference>
<dbReference type="Gene3D" id="3.10.20.30">
    <property type="match status" value="1"/>
</dbReference>
<dbReference type="Gene3D" id="3.30.54.20">
    <property type="match status" value="1"/>
</dbReference>
<dbReference type="Gene3D" id="3.40.50.800">
    <property type="entry name" value="Anticodon-binding domain"/>
    <property type="match status" value="1"/>
</dbReference>
<dbReference type="Gene3D" id="3.30.930.10">
    <property type="entry name" value="Bira Bifunctional Protein, Domain 2"/>
    <property type="match status" value="1"/>
</dbReference>
<dbReference type="Gene3D" id="3.30.980.10">
    <property type="entry name" value="Threonyl-trna Synthetase, Chain A, domain 2"/>
    <property type="match status" value="1"/>
</dbReference>
<dbReference type="HAMAP" id="MF_00184">
    <property type="entry name" value="Thr_tRNA_synth"/>
    <property type="match status" value="1"/>
</dbReference>
<dbReference type="InterPro" id="IPR002314">
    <property type="entry name" value="aa-tRNA-synt_IIb"/>
</dbReference>
<dbReference type="InterPro" id="IPR006195">
    <property type="entry name" value="aa-tRNA-synth_II"/>
</dbReference>
<dbReference type="InterPro" id="IPR045864">
    <property type="entry name" value="aa-tRNA-synth_II/BPL/LPL"/>
</dbReference>
<dbReference type="InterPro" id="IPR004154">
    <property type="entry name" value="Anticodon-bd"/>
</dbReference>
<dbReference type="InterPro" id="IPR036621">
    <property type="entry name" value="Anticodon-bd_dom_sf"/>
</dbReference>
<dbReference type="InterPro" id="IPR012675">
    <property type="entry name" value="Beta-grasp_dom_sf"/>
</dbReference>
<dbReference type="InterPro" id="IPR004095">
    <property type="entry name" value="TGS"/>
</dbReference>
<dbReference type="InterPro" id="IPR012676">
    <property type="entry name" value="TGS-like"/>
</dbReference>
<dbReference type="InterPro" id="IPR002320">
    <property type="entry name" value="Thr-tRNA-ligase_IIa"/>
</dbReference>
<dbReference type="InterPro" id="IPR018163">
    <property type="entry name" value="Thr/Ala-tRNA-synth_IIc_edit"/>
</dbReference>
<dbReference type="InterPro" id="IPR047246">
    <property type="entry name" value="ThrRS_anticodon"/>
</dbReference>
<dbReference type="InterPro" id="IPR033728">
    <property type="entry name" value="ThrRS_core"/>
</dbReference>
<dbReference type="InterPro" id="IPR012947">
    <property type="entry name" value="tRNA_SAD"/>
</dbReference>
<dbReference type="NCBIfam" id="TIGR00418">
    <property type="entry name" value="thrS"/>
    <property type="match status" value="1"/>
</dbReference>
<dbReference type="PANTHER" id="PTHR11451:SF44">
    <property type="entry name" value="THREONINE--TRNA LIGASE, CHLOROPLASTIC_MITOCHONDRIAL 2"/>
    <property type="match status" value="1"/>
</dbReference>
<dbReference type="PANTHER" id="PTHR11451">
    <property type="entry name" value="THREONINE-TRNA LIGASE"/>
    <property type="match status" value="1"/>
</dbReference>
<dbReference type="Pfam" id="PF03129">
    <property type="entry name" value="HGTP_anticodon"/>
    <property type="match status" value="1"/>
</dbReference>
<dbReference type="Pfam" id="PF02824">
    <property type="entry name" value="TGS"/>
    <property type="match status" value="1"/>
</dbReference>
<dbReference type="Pfam" id="PF00587">
    <property type="entry name" value="tRNA-synt_2b"/>
    <property type="match status" value="1"/>
</dbReference>
<dbReference type="Pfam" id="PF07973">
    <property type="entry name" value="tRNA_SAD"/>
    <property type="match status" value="1"/>
</dbReference>
<dbReference type="PRINTS" id="PR01047">
    <property type="entry name" value="TRNASYNTHTHR"/>
</dbReference>
<dbReference type="SMART" id="SM00863">
    <property type="entry name" value="tRNA_SAD"/>
    <property type="match status" value="1"/>
</dbReference>
<dbReference type="SUPFAM" id="SSF52954">
    <property type="entry name" value="Class II aaRS ABD-related"/>
    <property type="match status" value="1"/>
</dbReference>
<dbReference type="SUPFAM" id="SSF55681">
    <property type="entry name" value="Class II aaRS and biotin synthetases"/>
    <property type="match status" value="1"/>
</dbReference>
<dbReference type="SUPFAM" id="SSF81271">
    <property type="entry name" value="TGS-like"/>
    <property type="match status" value="1"/>
</dbReference>
<dbReference type="SUPFAM" id="SSF55186">
    <property type="entry name" value="ThrRS/AlaRS common domain"/>
    <property type="match status" value="1"/>
</dbReference>
<dbReference type="PROSITE" id="PS50862">
    <property type="entry name" value="AA_TRNA_LIGASE_II"/>
    <property type="match status" value="1"/>
</dbReference>
<dbReference type="PROSITE" id="PS51880">
    <property type="entry name" value="TGS"/>
    <property type="match status" value="1"/>
</dbReference>
<accession>B1LE12</accession>
<organism>
    <name type="scientific">Escherichia coli (strain SMS-3-5 / SECEC)</name>
    <dbReference type="NCBI Taxonomy" id="439855"/>
    <lineage>
        <taxon>Bacteria</taxon>
        <taxon>Pseudomonadati</taxon>
        <taxon>Pseudomonadota</taxon>
        <taxon>Gammaproteobacteria</taxon>
        <taxon>Enterobacterales</taxon>
        <taxon>Enterobacteriaceae</taxon>
        <taxon>Escherichia</taxon>
    </lineage>
</organism>
<protein>
    <recommendedName>
        <fullName evidence="1">Threonine--tRNA ligase</fullName>
        <ecNumber evidence="1">6.1.1.3</ecNumber>
    </recommendedName>
    <alternativeName>
        <fullName evidence="1">Threonyl-tRNA synthetase</fullName>
        <shortName evidence="1">ThrRS</shortName>
    </alternativeName>
</protein>
<evidence type="ECO:0000255" key="1">
    <source>
        <dbReference type="HAMAP-Rule" id="MF_00184"/>
    </source>
</evidence>
<evidence type="ECO:0000255" key="2">
    <source>
        <dbReference type="PROSITE-ProRule" id="PRU01228"/>
    </source>
</evidence>
<comment type="function">
    <text evidence="1">Catalyzes the attachment of threonine to tRNA(Thr) in a two-step reaction: L-threonine is first activated by ATP to form Thr-AMP and then transferred to the acceptor end of tRNA(Thr). Also edits incorrectly charged L-seryl-tRNA(Thr).</text>
</comment>
<comment type="catalytic activity">
    <reaction evidence="1">
        <text>tRNA(Thr) + L-threonine + ATP = L-threonyl-tRNA(Thr) + AMP + diphosphate + H(+)</text>
        <dbReference type="Rhea" id="RHEA:24624"/>
        <dbReference type="Rhea" id="RHEA-COMP:9670"/>
        <dbReference type="Rhea" id="RHEA-COMP:9704"/>
        <dbReference type="ChEBI" id="CHEBI:15378"/>
        <dbReference type="ChEBI" id="CHEBI:30616"/>
        <dbReference type="ChEBI" id="CHEBI:33019"/>
        <dbReference type="ChEBI" id="CHEBI:57926"/>
        <dbReference type="ChEBI" id="CHEBI:78442"/>
        <dbReference type="ChEBI" id="CHEBI:78534"/>
        <dbReference type="ChEBI" id="CHEBI:456215"/>
        <dbReference type="EC" id="6.1.1.3"/>
    </reaction>
</comment>
<comment type="cofactor">
    <cofactor evidence="1">
        <name>Zn(2+)</name>
        <dbReference type="ChEBI" id="CHEBI:29105"/>
    </cofactor>
    <text evidence="1">Binds 1 zinc ion per subunit.</text>
</comment>
<comment type="subunit">
    <text evidence="1">Homodimer.</text>
</comment>
<comment type="subcellular location">
    <subcellularLocation>
        <location evidence="1">Cytoplasm</location>
    </subcellularLocation>
</comment>
<comment type="similarity">
    <text evidence="1">Belongs to the class-II aminoacyl-tRNA synthetase family.</text>
</comment>
<proteinExistence type="inferred from homology"/>
<feature type="chain" id="PRO_1000199545" description="Threonine--tRNA ligase">
    <location>
        <begin position="1"/>
        <end position="642"/>
    </location>
</feature>
<feature type="domain" description="TGS" evidence="2">
    <location>
        <begin position="1"/>
        <end position="61"/>
    </location>
</feature>
<feature type="region of interest" description="Catalytic" evidence="1">
    <location>
        <begin position="243"/>
        <end position="534"/>
    </location>
</feature>
<feature type="binding site" evidence="1">
    <location>
        <position position="334"/>
    </location>
    <ligand>
        <name>Zn(2+)</name>
        <dbReference type="ChEBI" id="CHEBI:29105"/>
    </ligand>
</feature>
<feature type="binding site" evidence="1">
    <location>
        <position position="385"/>
    </location>
    <ligand>
        <name>Zn(2+)</name>
        <dbReference type="ChEBI" id="CHEBI:29105"/>
    </ligand>
</feature>
<feature type="binding site" evidence="1">
    <location>
        <position position="511"/>
    </location>
    <ligand>
        <name>Zn(2+)</name>
        <dbReference type="ChEBI" id="CHEBI:29105"/>
    </ligand>
</feature>
<feature type="modified residue" description="N6-acetyllysine" evidence="1">
    <location>
        <position position="286"/>
    </location>
</feature>
<sequence length="642" mass="74014">MPVITLPDGSQRHYDHAVSPMDVALDIGPGLAKACIAGRVNGELVDACDLIENDAQLSIITAKDEEGLEIIRHSCAHLLGHAIKQLWPHTKMAIGPVIDNGFYYDVDLDRTLTQEDVEALEKRMHELAEKNYDVIKKKVSWHEARETFANRGESYKVSILDENIAHDDKPGLYFHEEYVDMCRGPHVPNMRFCHHFKLMKTAGAYWRGDSNNKMLQRIYGTAWADKKALNAYLQRLEEAAKRDHRKIGKQLDLYHMQEEAPGMVFWHNDGWTIFRELEVFVRSKLKEYQYQEVKGPFMMDRVLWEKTGHWDNYKDAMFTTSSENREYCIKPMNCPGHVQIFNQGLKSYRDLPLRMAEFGSCHRNEPSGSLHGLMRVRGFTQDDAHIFCTEEQIRDEVNGCIRLVYDMYSTFGFEKIVVKLSTRPEKRIGSDEMWDRAEADLAVALEENNIPFEYQLGEGAFYGPKIEFTLYDCLDRAWQCGTVQLDFSLPSRLSASYVGEDNERKVPVMIHRAILGSMERFIGILTEEFAGFFPTWLAPVQVVIMNITDSQSEYVNELTQKLSNAGIRVKADLRNEKIGFKIREHTLRRVPYMLVCGDKEVESGKVAVRTRRGKDLGSMDVNEVIEKLQQEIRSRSLKQLEE</sequence>